<evidence type="ECO:0000250" key="1">
    <source>
        <dbReference type="UniProtKB" id="P02563"/>
    </source>
</evidence>
<evidence type="ECO:0000255" key="2"/>
<evidence type="ECO:0000305" key="3"/>
<proteinExistence type="evidence at transcript level"/>
<feature type="chain" id="PRO_0000123405" description="Myosin-6">
    <location>
        <begin position="1" status="less than"/>
        <end position="465" status="greater than"/>
    </location>
</feature>
<feature type="domain" description="Myosin motor">
    <location>
        <begin position="1" status="less than"/>
        <end position="35"/>
    </location>
</feature>
<feature type="coiled-coil region" evidence="2">
    <location>
        <begin position="36"/>
        <end position="465" status="greater than"/>
    </location>
</feature>
<feature type="modified residue" description="Phosphoserine" evidence="1">
    <location>
        <position position="285"/>
    </location>
</feature>
<feature type="modified residue" description="Phosphoserine" evidence="1">
    <location>
        <position position="334"/>
    </location>
</feature>
<feature type="modified residue" description="Phosphotyrosine" evidence="1">
    <location>
        <position position="456"/>
    </location>
</feature>
<feature type="sequence conflict" description="In Ref. 3; AAA31410." evidence="3" ref="3">
    <original>Q</original>
    <variation>L</variation>
    <location>
        <position position="271"/>
    </location>
</feature>
<feature type="non-terminal residue">
    <location>
        <position position="1"/>
    </location>
</feature>
<feature type="non-terminal residue">
    <location>
        <position position="465"/>
    </location>
</feature>
<comment type="function">
    <text>Muscle contraction.</text>
</comment>
<comment type="subunit">
    <text>Muscle myosin is a hexameric protein that consists of 2 heavy chain subunits (MHC), 2 alkali light chain subunits (MLC) and 2 regulatory light chain subunits (MLC-2).</text>
</comment>
<comment type="subcellular location">
    <subcellularLocation>
        <location>Cytoplasm</location>
        <location>Myofibril</location>
    </subcellularLocation>
    <text>Thick filaments of the myofibrils.</text>
</comment>
<comment type="domain">
    <text>The rodlike tail sequence is highly repetitive, showing cycles of a 28-residue repeat pattern composed of 4 heptapeptides, characteristic for alpha-helical coiled coils.</text>
</comment>
<comment type="domain">
    <text evidence="3">Limited proteolysis of myosin heavy chain produces 1 light meromyosin (LMM) and 1 heavy meromyosin (HMM). HMM can be further cleaved into 2 globular subfragments (S1) and 1 rod-shaped subfragment (S2).</text>
</comment>
<comment type="caution">
    <text evidence="3">Represents a conventional myosin. This protein should not be confused with the unconventional myosin-6 (MYO6).</text>
</comment>
<organism>
    <name type="scientific">Oryctolagus cuniculus</name>
    <name type="common">Rabbit</name>
    <dbReference type="NCBI Taxonomy" id="9986"/>
    <lineage>
        <taxon>Eukaryota</taxon>
        <taxon>Metazoa</taxon>
        <taxon>Chordata</taxon>
        <taxon>Craniata</taxon>
        <taxon>Vertebrata</taxon>
        <taxon>Euteleostomi</taxon>
        <taxon>Mammalia</taxon>
        <taxon>Eutheria</taxon>
        <taxon>Euarchontoglires</taxon>
        <taxon>Glires</taxon>
        <taxon>Lagomorpha</taxon>
        <taxon>Leporidae</taxon>
        <taxon>Oryctolagus</taxon>
    </lineage>
</organism>
<gene>
    <name type="primary">MYH6</name>
</gene>
<keyword id="KW-0009">Actin-binding</keyword>
<keyword id="KW-0067">ATP-binding</keyword>
<keyword id="KW-0175">Coiled coil</keyword>
<keyword id="KW-0963">Cytoplasm</keyword>
<keyword id="KW-0505">Motor protein</keyword>
<keyword id="KW-0514">Muscle protein</keyword>
<keyword id="KW-0518">Myosin</keyword>
<keyword id="KW-0547">Nucleotide-binding</keyword>
<keyword id="KW-0597">Phosphoprotein</keyword>
<keyword id="KW-1185">Reference proteome</keyword>
<keyword id="KW-0787">Thick filament</keyword>
<accession>P04460</accession>
<accession>Q28712</accession>
<dbReference type="EMBL" id="K02443">
    <property type="protein sequence ID" value="AAA31412.1"/>
    <property type="molecule type" value="mRNA"/>
</dbReference>
<dbReference type="EMBL" id="K01697">
    <property type="protein sequence ID" value="AAA31416.1"/>
    <property type="molecule type" value="mRNA"/>
</dbReference>
<dbReference type="EMBL" id="J00671">
    <property type="protein sequence ID" value="AAA31410.1"/>
    <property type="molecule type" value="mRNA"/>
</dbReference>
<dbReference type="PIR" id="A02986">
    <property type="entry name" value="A02986"/>
</dbReference>
<dbReference type="SMR" id="P04460"/>
<dbReference type="InParanoid" id="P04460"/>
<dbReference type="Proteomes" id="UP000001811">
    <property type="component" value="Unplaced"/>
</dbReference>
<dbReference type="GO" id="GO:0030016">
    <property type="term" value="C:myofibril"/>
    <property type="evidence" value="ECO:0007669"/>
    <property type="project" value="UniProtKB-SubCell"/>
</dbReference>
<dbReference type="GO" id="GO:0032982">
    <property type="term" value="C:myosin filament"/>
    <property type="evidence" value="ECO:0007669"/>
    <property type="project" value="UniProtKB-KW"/>
</dbReference>
<dbReference type="GO" id="GO:0016460">
    <property type="term" value="C:myosin II complex"/>
    <property type="evidence" value="ECO:0007669"/>
    <property type="project" value="TreeGrafter"/>
</dbReference>
<dbReference type="GO" id="GO:0051015">
    <property type="term" value="F:actin filament binding"/>
    <property type="evidence" value="ECO:0007669"/>
    <property type="project" value="TreeGrafter"/>
</dbReference>
<dbReference type="GO" id="GO:0005524">
    <property type="term" value="F:ATP binding"/>
    <property type="evidence" value="ECO:0007669"/>
    <property type="project" value="UniProtKB-KW"/>
</dbReference>
<dbReference type="GO" id="GO:0000146">
    <property type="term" value="F:microfilament motor activity"/>
    <property type="evidence" value="ECO:0007669"/>
    <property type="project" value="TreeGrafter"/>
</dbReference>
<dbReference type="FunFam" id="1.20.5.340:FF:000002">
    <property type="entry name" value="Myosin heavy chain"/>
    <property type="match status" value="1"/>
</dbReference>
<dbReference type="FunFam" id="1.20.5.340:FF:000004">
    <property type="entry name" value="Myosin heavy chain"/>
    <property type="match status" value="1"/>
</dbReference>
<dbReference type="FunFam" id="1.20.5.340:FF:000006">
    <property type="entry name" value="Myosin heavy chain"/>
    <property type="match status" value="1"/>
</dbReference>
<dbReference type="FunFam" id="1.20.5.340:FF:000050">
    <property type="entry name" value="Myosin heavy chain, muscle"/>
    <property type="match status" value="1"/>
</dbReference>
<dbReference type="Gene3D" id="1.20.5.340">
    <property type="match status" value="3"/>
</dbReference>
<dbReference type="Gene3D" id="4.10.270.10">
    <property type="entry name" value="Myosin, subunit A"/>
    <property type="match status" value="1"/>
</dbReference>
<dbReference type="InterPro" id="IPR002928">
    <property type="entry name" value="Myosin_tail"/>
</dbReference>
<dbReference type="PANTHER" id="PTHR45615">
    <property type="entry name" value="MYOSIN HEAVY CHAIN, NON-MUSCLE"/>
    <property type="match status" value="1"/>
</dbReference>
<dbReference type="PANTHER" id="PTHR45615:SF69">
    <property type="entry name" value="MYOSIN-6"/>
    <property type="match status" value="1"/>
</dbReference>
<dbReference type="Pfam" id="PF01576">
    <property type="entry name" value="Myosin_tail_1"/>
    <property type="match status" value="1"/>
</dbReference>
<dbReference type="SUPFAM" id="SSF90257">
    <property type="entry name" value="Myosin rod fragments"/>
    <property type="match status" value="4"/>
</dbReference>
<name>MYH6_RABIT</name>
<protein>
    <recommendedName>
        <fullName>Myosin-6</fullName>
    </recommendedName>
    <alternativeName>
        <fullName>Alpha isomyosin</fullName>
    </alternativeName>
    <alternativeName>
        <fullName>Myosin heavy chain 6</fullName>
    </alternativeName>
    <alternativeName>
        <fullName>Myosin heavy chain, cardiac muscle alpha isoform</fullName>
        <shortName>MyHC-alpha</shortName>
    </alternativeName>
</protein>
<sequence length="465" mass="54376">ILERGDALLVVQWNIRAFTGVKKWPWMELYFEIEPLLKSAEAEKEMAAMKEEFGRIKESLEKSEARRKELEEKMVSLLQEKNDLQLQVQAEQDNLNDAEERCDQLIKNKIQLEAKVKEMNERLEDEEEMNAELTAKKRKLEDECSELKKDIDDLELTLAKVEKEKHATENKVKNLTEEMAGLDEIIAKLTKEKKALQEAHQQALDDLQAEEDKVNTLTKAKLKLEQQVDDLEGSLEQEKKVRMDLERAKRKLEGDLKLTQESIMDLENDKQQLEERLKKKEFDISQLNSKIEDEQALVLQLQKKLKENQARIEELEEELEAERTARAKVEKLRSDLSRELEEISERLEEAGGATSVQIEMNKKREAEFQKMRRDLEEATLQHEATASALRRKHADSVAELGEQIDNLQRVKQKLEKEKSEFKLELDDVTSNMEQIIKAKANLEKVSRTLEDQANEYRRKLEEAQR</sequence>
<reference key="1">
    <citation type="journal article" date="1984" name="J. Biol. Chem.">
        <title>Analysis of cloned mRNA sequences encoding subfragment 2 and part of subfragment 1 of alpha- and beta-myosin heavy chains of rabbit heart.</title>
        <authorList>
            <person name="Kavinsky C.J."/>
            <person name="Umeda P.K."/>
            <person name="Levin J.E."/>
            <person name="Sinha A.M."/>
            <person name="Nigro J.M."/>
            <person name="Jakovcic S."/>
            <person name="Rabinowitz M."/>
        </authorList>
    </citation>
    <scope>NUCLEOTIDE SEQUENCE [MRNA]</scope>
</reference>
<reference key="2">
    <citation type="journal article" date="1984" name="Proc. Natl. Acad. Sci. U.S.A.">
        <title>Characterization of genomic clones specifying rabbit alpha- and beta-ventricular myosin heavy chains.</title>
        <authorList>
            <person name="Friedman D.J."/>
            <person name="Umeda P.K."/>
            <person name="Sinha A.M."/>
            <person name="Hsu H.J."/>
            <person name="Jokovcic S."/>
            <person name="Rabinowitz M."/>
        </authorList>
    </citation>
    <scope>NUCLEOTIDE SEQUENCE [MRNA] OF 91-177</scope>
</reference>
<reference key="3">
    <citation type="journal article" date="1982" name="Proc. Natl. Acad. Sci. U.S.A.">
        <title>Molecular cloning of mRNA sequences for cardiac alpha- and beta-form myosin heavy chains: expression in ventricles of normal, hypothyroid, and thyrotoxic rabbits.</title>
        <authorList>
            <person name="Sinha A.M."/>
            <person name="Umeda P.K."/>
            <person name="Kavinsky C.J."/>
            <person name="Rajamanickam C."/>
            <person name="Hsu H.J."/>
            <person name="Jakovcic S."/>
            <person name="Rabinowitz M."/>
        </authorList>
    </citation>
    <scope>NUCLEOTIDE SEQUENCE [MRNA] OF 233-353</scope>
</reference>